<gene>
    <name evidence="1" type="primary">pyrG</name>
    <name type="ordered locus">UU284</name>
</gene>
<feature type="chain" id="PRO_0000138245" description="Putative CTP synthase">
    <location>
        <begin position="1"/>
        <end position="542"/>
    </location>
</feature>
<feature type="domain" description="Glutamine amidotransferase type-1" evidence="1">
    <location>
        <begin position="310"/>
        <end position="542"/>
    </location>
</feature>
<feature type="region of interest" description="Amidoligase domain" evidence="1">
    <location>
        <begin position="1"/>
        <end position="277"/>
    </location>
</feature>
<feature type="active site" evidence="1">
    <location>
        <position position="517"/>
    </location>
</feature>
<feature type="binding site" evidence="1">
    <location>
        <position position="23"/>
    </location>
    <ligand>
        <name>CTP</name>
        <dbReference type="ChEBI" id="CHEBI:37563"/>
        <note>allosteric inhibitor</note>
    </ligand>
</feature>
<feature type="binding site" evidence="1">
    <location>
        <position position="23"/>
    </location>
    <ligand>
        <name>UTP</name>
        <dbReference type="ChEBI" id="CHEBI:46398"/>
    </ligand>
</feature>
<feature type="binding site" evidence="1">
    <location>
        <begin position="24"/>
        <end position="29"/>
    </location>
    <ligand>
        <name>ATP</name>
        <dbReference type="ChEBI" id="CHEBI:30616"/>
    </ligand>
</feature>
<feature type="binding site" evidence="1">
    <location>
        <position position="81"/>
    </location>
    <ligand>
        <name>ATP</name>
        <dbReference type="ChEBI" id="CHEBI:30616"/>
    </ligand>
</feature>
<feature type="binding site" evidence="1">
    <location>
        <position position="81"/>
    </location>
    <ligand>
        <name>Mg(2+)</name>
        <dbReference type="ChEBI" id="CHEBI:18420"/>
    </ligand>
</feature>
<feature type="binding site" evidence="1">
    <location>
        <position position="151"/>
    </location>
    <ligand>
        <name>Mg(2+)</name>
        <dbReference type="ChEBI" id="CHEBI:18420"/>
    </ligand>
</feature>
<feature type="binding site" evidence="1">
    <location>
        <begin position="158"/>
        <end position="160"/>
    </location>
    <ligand>
        <name>CTP</name>
        <dbReference type="ChEBI" id="CHEBI:37563"/>
        <note>allosteric inhibitor</note>
    </ligand>
</feature>
<feature type="binding site" evidence="1">
    <location>
        <begin position="198"/>
        <end position="203"/>
    </location>
    <ligand>
        <name>CTP</name>
        <dbReference type="ChEBI" id="CHEBI:37563"/>
        <note>allosteric inhibitor</note>
    </ligand>
</feature>
<feature type="binding site" evidence="1">
    <location>
        <begin position="198"/>
        <end position="203"/>
    </location>
    <ligand>
        <name>UTP</name>
        <dbReference type="ChEBI" id="CHEBI:46398"/>
    </ligand>
</feature>
<feature type="binding site" evidence="1">
    <location>
        <position position="234"/>
    </location>
    <ligand>
        <name>CTP</name>
        <dbReference type="ChEBI" id="CHEBI:37563"/>
        <note>allosteric inhibitor</note>
    </ligand>
</feature>
<feature type="binding site" evidence="1">
    <location>
        <position position="234"/>
    </location>
    <ligand>
        <name>UTP</name>
        <dbReference type="ChEBI" id="CHEBI:46398"/>
    </ligand>
</feature>
<accession>Q9PQK7</accession>
<dbReference type="EC" id="6.3.4.2" evidence="1"/>
<dbReference type="EMBL" id="AF222894">
    <property type="protein sequence ID" value="AAF30693.1"/>
    <property type="molecule type" value="Genomic_DNA"/>
</dbReference>
<dbReference type="SMR" id="Q9PQK7"/>
<dbReference type="STRING" id="273119.UU284"/>
<dbReference type="EnsemblBacteria" id="AAF30693">
    <property type="protein sequence ID" value="AAF30693"/>
    <property type="gene ID" value="UU284"/>
</dbReference>
<dbReference type="KEGG" id="uur:UU284"/>
<dbReference type="eggNOG" id="COG0504">
    <property type="taxonomic scope" value="Bacteria"/>
</dbReference>
<dbReference type="HOGENOM" id="CLU_011675_5_0_14"/>
<dbReference type="UniPathway" id="UPA00159">
    <property type="reaction ID" value="UER00277"/>
</dbReference>
<dbReference type="Proteomes" id="UP000000423">
    <property type="component" value="Chromosome"/>
</dbReference>
<dbReference type="GO" id="GO:0005829">
    <property type="term" value="C:cytosol"/>
    <property type="evidence" value="ECO:0007669"/>
    <property type="project" value="TreeGrafter"/>
</dbReference>
<dbReference type="GO" id="GO:0005524">
    <property type="term" value="F:ATP binding"/>
    <property type="evidence" value="ECO:0007669"/>
    <property type="project" value="UniProtKB-KW"/>
</dbReference>
<dbReference type="GO" id="GO:0003883">
    <property type="term" value="F:CTP synthase activity"/>
    <property type="evidence" value="ECO:0007669"/>
    <property type="project" value="UniProtKB-EC"/>
</dbReference>
<dbReference type="GO" id="GO:0004359">
    <property type="term" value="F:glutaminase activity"/>
    <property type="evidence" value="ECO:0007669"/>
    <property type="project" value="RHEA"/>
</dbReference>
<dbReference type="GO" id="GO:0042802">
    <property type="term" value="F:identical protein binding"/>
    <property type="evidence" value="ECO:0007669"/>
    <property type="project" value="TreeGrafter"/>
</dbReference>
<dbReference type="GO" id="GO:0046872">
    <property type="term" value="F:metal ion binding"/>
    <property type="evidence" value="ECO:0007669"/>
    <property type="project" value="UniProtKB-KW"/>
</dbReference>
<dbReference type="GO" id="GO:0044210">
    <property type="term" value="P:'de novo' CTP biosynthetic process"/>
    <property type="evidence" value="ECO:0007669"/>
    <property type="project" value="UniProtKB-UniPathway"/>
</dbReference>
<dbReference type="GO" id="GO:0019856">
    <property type="term" value="P:pyrimidine nucleobase biosynthetic process"/>
    <property type="evidence" value="ECO:0007669"/>
    <property type="project" value="TreeGrafter"/>
</dbReference>
<dbReference type="CDD" id="cd03113">
    <property type="entry name" value="CTPS_N"/>
    <property type="match status" value="1"/>
</dbReference>
<dbReference type="CDD" id="cd01746">
    <property type="entry name" value="GATase1_CTP_Synthase"/>
    <property type="match status" value="1"/>
</dbReference>
<dbReference type="FunFam" id="3.40.50.300:FF:000009">
    <property type="entry name" value="CTP synthase"/>
    <property type="match status" value="1"/>
</dbReference>
<dbReference type="Gene3D" id="3.40.50.880">
    <property type="match status" value="1"/>
</dbReference>
<dbReference type="Gene3D" id="3.40.50.300">
    <property type="entry name" value="P-loop containing nucleotide triphosphate hydrolases"/>
    <property type="match status" value="1"/>
</dbReference>
<dbReference type="InterPro" id="IPR029062">
    <property type="entry name" value="Class_I_gatase-like"/>
</dbReference>
<dbReference type="InterPro" id="IPR004468">
    <property type="entry name" value="CTP_synthase"/>
</dbReference>
<dbReference type="InterPro" id="IPR017456">
    <property type="entry name" value="CTP_synthase_N"/>
</dbReference>
<dbReference type="InterPro" id="IPR017926">
    <property type="entry name" value="GATASE"/>
</dbReference>
<dbReference type="InterPro" id="IPR033828">
    <property type="entry name" value="GATase1_CTP_Synthase"/>
</dbReference>
<dbReference type="InterPro" id="IPR027417">
    <property type="entry name" value="P-loop_NTPase"/>
</dbReference>
<dbReference type="NCBIfam" id="NF003792">
    <property type="entry name" value="PRK05380.1"/>
    <property type="match status" value="1"/>
</dbReference>
<dbReference type="NCBIfam" id="TIGR00337">
    <property type="entry name" value="PyrG"/>
    <property type="match status" value="1"/>
</dbReference>
<dbReference type="PANTHER" id="PTHR11550">
    <property type="entry name" value="CTP SYNTHASE"/>
    <property type="match status" value="1"/>
</dbReference>
<dbReference type="PANTHER" id="PTHR11550:SF0">
    <property type="entry name" value="CTP SYNTHASE-RELATED"/>
    <property type="match status" value="1"/>
</dbReference>
<dbReference type="Pfam" id="PF06418">
    <property type="entry name" value="CTP_synth_N"/>
    <property type="match status" value="1"/>
</dbReference>
<dbReference type="Pfam" id="PF00117">
    <property type="entry name" value="GATase"/>
    <property type="match status" value="1"/>
</dbReference>
<dbReference type="SUPFAM" id="SSF52317">
    <property type="entry name" value="Class I glutamine amidotransferase-like"/>
    <property type="match status" value="1"/>
</dbReference>
<dbReference type="SUPFAM" id="SSF52540">
    <property type="entry name" value="P-loop containing nucleoside triphosphate hydrolases"/>
    <property type="match status" value="1"/>
</dbReference>
<proteinExistence type="inferred from homology"/>
<reference key="1">
    <citation type="journal article" date="2000" name="Nature">
        <title>The complete sequence of the mucosal pathogen Ureaplasma urealyticum.</title>
        <authorList>
            <person name="Glass J.I."/>
            <person name="Lefkowitz E.J."/>
            <person name="Glass J.S."/>
            <person name="Heiner C.R."/>
            <person name="Chen E.Y."/>
            <person name="Cassell G.H."/>
        </authorList>
    </citation>
    <scope>NUCLEOTIDE SEQUENCE [LARGE SCALE GENOMIC DNA]</scope>
    <source>
        <strain>ATCC 700970</strain>
    </source>
</reference>
<keyword id="KW-0067">ATP-binding</keyword>
<keyword id="KW-0315">Glutamine amidotransferase</keyword>
<keyword id="KW-0436">Ligase</keyword>
<keyword id="KW-0460">Magnesium</keyword>
<keyword id="KW-0479">Metal-binding</keyword>
<keyword id="KW-0547">Nucleotide-binding</keyword>
<keyword id="KW-0665">Pyrimidine biosynthesis</keyword>
<keyword id="KW-1185">Reference proteome</keyword>
<organism>
    <name type="scientific">Ureaplasma parvum serovar 3 (strain ATCC 700970)</name>
    <dbReference type="NCBI Taxonomy" id="273119"/>
    <lineage>
        <taxon>Bacteria</taxon>
        <taxon>Bacillati</taxon>
        <taxon>Mycoplasmatota</taxon>
        <taxon>Mycoplasmoidales</taxon>
        <taxon>Mycoplasmoidaceae</taxon>
        <taxon>Ureaplasma</taxon>
    </lineage>
</organism>
<comment type="function">
    <text evidence="1">Catalyzes the ATP-dependent amination of UTP to CTP with either L-glutamine or ammonia as the source of nitrogen. Regulates intracellular CTP levels through interactions with the four ribonucleotide triphosphates.</text>
</comment>
<comment type="catalytic activity">
    <reaction evidence="1">
        <text>UTP + L-glutamine + ATP + H2O = CTP + L-glutamate + ADP + phosphate + 2 H(+)</text>
        <dbReference type="Rhea" id="RHEA:26426"/>
        <dbReference type="ChEBI" id="CHEBI:15377"/>
        <dbReference type="ChEBI" id="CHEBI:15378"/>
        <dbReference type="ChEBI" id="CHEBI:29985"/>
        <dbReference type="ChEBI" id="CHEBI:30616"/>
        <dbReference type="ChEBI" id="CHEBI:37563"/>
        <dbReference type="ChEBI" id="CHEBI:43474"/>
        <dbReference type="ChEBI" id="CHEBI:46398"/>
        <dbReference type="ChEBI" id="CHEBI:58359"/>
        <dbReference type="ChEBI" id="CHEBI:456216"/>
        <dbReference type="EC" id="6.3.4.2"/>
    </reaction>
</comment>
<comment type="catalytic activity">
    <reaction evidence="1">
        <text>L-glutamine + H2O = L-glutamate + NH4(+)</text>
        <dbReference type="Rhea" id="RHEA:15889"/>
        <dbReference type="ChEBI" id="CHEBI:15377"/>
        <dbReference type="ChEBI" id="CHEBI:28938"/>
        <dbReference type="ChEBI" id="CHEBI:29985"/>
        <dbReference type="ChEBI" id="CHEBI:58359"/>
    </reaction>
</comment>
<comment type="catalytic activity">
    <reaction evidence="1">
        <text>UTP + NH4(+) + ATP = CTP + ADP + phosphate + 2 H(+)</text>
        <dbReference type="Rhea" id="RHEA:16597"/>
        <dbReference type="ChEBI" id="CHEBI:15378"/>
        <dbReference type="ChEBI" id="CHEBI:28938"/>
        <dbReference type="ChEBI" id="CHEBI:30616"/>
        <dbReference type="ChEBI" id="CHEBI:37563"/>
        <dbReference type="ChEBI" id="CHEBI:43474"/>
        <dbReference type="ChEBI" id="CHEBI:46398"/>
        <dbReference type="ChEBI" id="CHEBI:456216"/>
    </reaction>
</comment>
<comment type="activity regulation">
    <text evidence="1">Allosterically activated by GTP, when glutamine is the substrate; GTP has no effect on the reaction when ammonia is the substrate. The allosteric effector GTP functions by stabilizing the protein conformation that binds the tetrahedral intermediate(s) formed during glutamine hydrolysis. Inhibited by the product CTP, via allosteric rather than competitive inhibition.</text>
</comment>
<comment type="pathway">
    <text evidence="1">Pyrimidine metabolism; CTP biosynthesis via de novo pathway; CTP from UDP: step 2/2.</text>
</comment>
<comment type="subunit">
    <text evidence="1">Homotetramer.</text>
</comment>
<comment type="miscellaneous">
    <text evidence="1">CTPSs have evolved a hybrid strategy for distinguishing between UTP and CTP. The overlapping regions of the product feedback inhibitory and substrate sites recognize a common feature in both compounds, the triphosphate moiety. To differentiate isosteric substrate and product pyrimidine rings, an additional pocket far from the expected kinase/ligase catalytic site, specifically recognizes the cytosine and ribose portions of the product inhibitor.</text>
</comment>
<comment type="similarity">
    <text evidence="2">Belongs to the CTP synthase family.</text>
</comment>
<comment type="caution">
    <text evidence="2">Lacks the conserved cysteine and histidine residues potentially involved in the active site of the GAT domain.</text>
</comment>
<sequence length="542" mass="61347">MEIDLMKHIQKTKFIFVTGGVYSSLGKGVSASSIGRILVELGYSVAMQKLDPYLNIDPTYLSPLQHGEVFVTKDGKEADLDLGTYERFINADLNKYASVTSGKIYYEILTKERENGFDGKTVQTIPHVTSAVIDYIKKIKDSLKTDFIIVEIGGTIGDIESLPFIEAISQFKTIYGVNNVMFIHCSPLIYIEKVGELKTKPTQHSVKTLRSLGINLDLLLLRTNQKLDEVTIKKLAWSCGLDIDMIFAAYDVESVYLLPNVLFEQGIHKTILDFFSLPLKNDNINSWIDFTDKITTFKKHNLVIGLVGKYVELPDAYKSVLASLELAAIELNIDLKIKYIQPQNLNENNINEELKKINGIVIPSIAGSIKGWPGALLAASYARKNNIPFLAVGTGVNIGIGEFINNVLKLPIEFINLGNGDFSFLKDAFVKNEIENYRIGEYCSNIQANTITSQIYLKQNQLNERHRHHFEFNNHYINNYFLNQNWKIGAISVDNNYIDVLEYTKNHFYVLTIFNPEYTSKPSKANPYFINLLKMSLKIKES</sequence>
<evidence type="ECO:0000250" key="1">
    <source>
        <dbReference type="UniProtKB" id="P0A7E5"/>
    </source>
</evidence>
<evidence type="ECO:0000305" key="2"/>
<protein>
    <recommendedName>
        <fullName evidence="1 2">Putative CTP synthase</fullName>
        <ecNumber evidence="1">6.3.4.2</ecNumber>
    </recommendedName>
    <alternativeName>
        <fullName evidence="1">Cytidine 5'-triphosphate synthase</fullName>
    </alternativeName>
    <alternativeName>
        <fullName evidence="1">Cytidine triphosphate synthetase</fullName>
        <shortName evidence="1">CTP synthetase</shortName>
        <shortName evidence="1">CTPS</shortName>
    </alternativeName>
    <alternativeName>
        <fullName evidence="1">UTP--ammonia ligase</fullName>
    </alternativeName>
</protein>
<name>PYRG_UREPA</name>